<dbReference type="EC" id="4.1.2.4" evidence="1"/>
<dbReference type="EMBL" id="BX571856">
    <property type="protein sequence ID" value="CAG39167.1"/>
    <property type="molecule type" value="Genomic_DNA"/>
</dbReference>
<dbReference type="SMR" id="Q6GKG7"/>
<dbReference type="KEGG" id="sar:SAR0140"/>
<dbReference type="HOGENOM" id="CLU_053595_0_1_9"/>
<dbReference type="UniPathway" id="UPA00002">
    <property type="reaction ID" value="UER00468"/>
</dbReference>
<dbReference type="Proteomes" id="UP000000596">
    <property type="component" value="Chromosome"/>
</dbReference>
<dbReference type="GO" id="GO:0005737">
    <property type="term" value="C:cytoplasm"/>
    <property type="evidence" value="ECO:0007669"/>
    <property type="project" value="UniProtKB-SubCell"/>
</dbReference>
<dbReference type="GO" id="GO:0004139">
    <property type="term" value="F:deoxyribose-phosphate aldolase activity"/>
    <property type="evidence" value="ECO:0007669"/>
    <property type="project" value="UniProtKB-UniRule"/>
</dbReference>
<dbReference type="GO" id="GO:0006018">
    <property type="term" value="P:2-deoxyribose 1-phosphate catabolic process"/>
    <property type="evidence" value="ECO:0007669"/>
    <property type="project" value="UniProtKB-UniRule"/>
</dbReference>
<dbReference type="GO" id="GO:0016052">
    <property type="term" value="P:carbohydrate catabolic process"/>
    <property type="evidence" value="ECO:0007669"/>
    <property type="project" value="TreeGrafter"/>
</dbReference>
<dbReference type="GO" id="GO:0009264">
    <property type="term" value="P:deoxyribonucleotide catabolic process"/>
    <property type="evidence" value="ECO:0007669"/>
    <property type="project" value="InterPro"/>
</dbReference>
<dbReference type="CDD" id="cd00959">
    <property type="entry name" value="DeoC"/>
    <property type="match status" value="1"/>
</dbReference>
<dbReference type="FunFam" id="3.20.20.70:FF:000044">
    <property type="entry name" value="Deoxyribose-phosphate aldolase"/>
    <property type="match status" value="1"/>
</dbReference>
<dbReference type="Gene3D" id="3.20.20.70">
    <property type="entry name" value="Aldolase class I"/>
    <property type="match status" value="1"/>
</dbReference>
<dbReference type="HAMAP" id="MF_00114">
    <property type="entry name" value="DeoC_type1"/>
    <property type="match status" value="1"/>
</dbReference>
<dbReference type="InterPro" id="IPR013785">
    <property type="entry name" value="Aldolase_TIM"/>
</dbReference>
<dbReference type="InterPro" id="IPR011343">
    <property type="entry name" value="DeoC"/>
</dbReference>
<dbReference type="InterPro" id="IPR002915">
    <property type="entry name" value="DeoC/FbaB/LacD_aldolase"/>
</dbReference>
<dbReference type="InterPro" id="IPR028581">
    <property type="entry name" value="DeoC_typeI"/>
</dbReference>
<dbReference type="NCBIfam" id="TIGR00126">
    <property type="entry name" value="deoC"/>
    <property type="match status" value="1"/>
</dbReference>
<dbReference type="PANTHER" id="PTHR10889">
    <property type="entry name" value="DEOXYRIBOSE-PHOSPHATE ALDOLASE"/>
    <property type="match status" value="1"/>
</dbReference>
<dbReference type="PANTHER" id="PTHR10889:SF1">
    <property type="entry name" value="DEOXYRIBOSE-PHOSPHATE ALDOLASE"/>
    <property type="match status" value="1"/>
</dbReference>
<dbReference type="Pfam" id="PF01791">
    <property type="entry name" value="DeoC"/>
    <property type="match status" value="1"/>
</dbReference>
<dbReference type="PIRSF" id="PIRSF001357">
    <property type="entry name" value="DeoC"/>
    <property type="match status" value="1"/>
</dbReference>
<dbReference type="SMART" id="SM01133">
    <property type="entry name" value="DeoC"/>
    <property type="match status" value="1"/>
</dbReference>
<dbReference type="SUPFAM" id="SSF51569">
    <property type="entry name" value="Aldolase"/>
    <property type="match status" value="1"/>
</dbReference>
<organism>
    <name type="scientific">Staphylococcus aureus (strain MRSA252)</name>
    <dbReference type="NCBI Taxonomy" id="282458"/>
    <lineage>
        <taxon>Bacteria</taxon>
        <taxon>Bacillati</taxon>
        <taxon>Bacillota</taxon>
        <taxon>Bacilli</taxon>
        <taxon>Bacillales</taxon>
        <taxon>Staphylococcaceae</taxon>
        <taxon>Staphylococcus</taxon>
    </lineage>
</organism>
<comment type="function">
    <text evidence="1">Catalyzes a reversible aldol reaction between acetaldehyde and D-glyceraldehyde 3-phosphate to generate 2-deoxy-D-ribose 5-phosphate.</text>
</comment>
<comment type="catalytic activity">
    <reaction evidence="1">
        <text>2-deoxy-D-ribose 5-phosphate = D-glyceraldehyde 3-phosphate + acetaldehyde</text>
        <dbReference type="Rhea" id="RHEA:12821"/>
        <dbReference type="ChEBI" id="CHEBI:15343"/>
        <dbReference type="ChEBI" id="CHEBI:59776"/>
        <dbReference type="ChEBI" id="CHEBI:62877"/>
        <dbReference type="EC" id="4.1.2.4"/>
    </reaction>
</comment>
<comment type="pathway">
    <text evidence="1">Carbohydrate degradation; 2-deoxy-D-ribose 1-phosphate degradation; D-glyceraldehyde 3-phosphate and acetaldehyde from 2-deoxy-alpha-D-ribose 1-phosphate: step 2/2.</text>
</comment>
<comment type="subcellular location">
    <subcellularLocation>
        <location evidence="1">Cytoplasm</location>
    </subcellularLocation>
</comment>
<comment type="similarity">
    <text evidence="1 2">Belongs to the DeoC/FbaB aldolase family. DeoC type 1 subfamily.</text>
</comment>
<gene>
    <name evidence="1" type="primary">deoC1</name>
    <name type="synonym">dra</name>
    <name type="ordered locus">SAR0140</name>
</gene>
<accession>Q6GKG7</accession>
<evidence type="ECO:0000255" key="1">
    <source>
        <dbReference type="HAMAP-Rule" id="MF_00114"/>
    </source>
</evidence>
<evidence type="ECO:0000305" key="2"/>
<feature type="chain" id="PRO_0000057261" description="Deoxyribose-phosphate aldolase 1">
    <location>
        <begin position="1"/>
        <end position="220"/>
    </location>
</feature>
<feature type="active site" description="Proton donor/acceptor" evidence="1">
    <location>
        <position position="89"/>
    </location>
</feature>
<feature type="active site" description="Schiff-base intermediate with acetaldehyde" evidence="1">
    <location>
        <position position="151"/>
    </location>
</feature>
<feature type="active site" description="Proton donor/acceptor" evidence="1">
    <location>
        <position position="180"/>
    </location>
</feature>
<name>DEOC1_STAAR</name>
<sequence length="220" mass="23501">MKFEKYIDHTLLKPESTRTQIDQIIDEAKAYNFKSVCVNPTHVKYAAERLADSEVLVCTVIGFPLGASTTATKVFETEDAIQNGADEIDMVINIGALKDGRFDDVQQDIEAVVKAAEGHTVKVIIETVLLDHDEIVKASELTKAAGADFVKTSTGFAGGGATAEDVKLMKDTVGADVEVKASGGVRNLEDFNKMVEAGATRIGASAGVQIMQGLEADSDY</sequence>
<protein>
    <recommendedName>
        <fullName evidence="1">Deoxyribose-phosphate aldolase 1</fullName>
        <shortName evidence="1">DERA 1</shortName>
        <ecNumber evidence="1">4.1.2.4</ecNumber>
    </recommendedName>
    <alternativeName>
        <fullName evidence="1">2-deoxy-D-ribose 5-phosphate aldolase 1</fullName>
    </alternativeName>
    <alternativeName>
        <fullName evidence="1">Phosphodeoxyriboaldolase 1</fullName>
        <shortName evidence="1">Deoxyriboaldolase 1</shortName>
    </alternativeName>
</protein>
<keyword id="KW-0963">Cytoplasm</keyword>
<keyword id="KW-0456">Lyase</keyword>
<keyword id="KW-0704">Schiff base</keyword>
<proteinExistence type="inferred from homology"/>
<reference key="1">
    <citation type="journal article" date="2004" name="Proc. Natl. Acad. Sci. U.S.A.">
        <title>Complete genomes of two clinical Staphylococcus aureus strains: evidence for the rapid evolution of virulence and drug resistance.</title>
        <authorList>
            <person name="Holden M.T.G."/>
            <person name="Feil E.J."/>
            <person name="Lindsay J.A."/>
            <person name="Peacock S.J."/>
            <person name="Day N.P.J."/>
            <person name="Enright M.C."/>
            <person name="Foster T.J."/>
            <person name="Moore C.E."/>
            <person name="Hurst L."/>
            <person name="Atkin R."/>
            <person name="Barron A."/>
            <person name="Bason N."/>
            <person name="Bentley S.D."/>
            <person name="Chillingworth C."/>
            <person name="Chillingworth T."/>
            <person name="Churcher C."/>
            <person name="Clark L."/>
            <person name="Corton C."/>
            <person name="Cronin A."/>
            <person name="Doggett J."/>
            <person name="Dowd L."/>
            <person name="Feltwell T."/>
            <person name="Hance Z."/>
            <person name="Harris B."/>
            <person name="Hauser H."/>
            <person name="Holroyd S."/>
            <person name="Jagels K."/>
            <person name="James K.D."/>
            <person name="Lennard N."/>
            <person name="Line A."/>
            <person name="Mayes R."/>
            <person name="Moule S."/>
            <person name="Mungall K."/>
            <person name="Ormond D."/>
            <person name="Quail M.A."/>
            <person name="Rabbinowitsch E."/>
            <person name="Rutherford K.M."/>
            <person name="Sanders M."/>
            <person name="Sharp S."/>
            <person name="Simmonds M."/>
            <person name="Stevens K."/>
            <person name="Whitehead S."/>
            <person name="Barrell B.G."/>
            <person name="Spratt B.G."/>
            <person name="Parkhill J."/>
        </authorList>
    </citation>
    <scope>NUCLEOTIDE SEQUENCE [LARGE SCALE GENOMIC DNA]</scope>
    <source>
        <strain>MRSA252</strain>
    </source>
</reference>